<comment type="function">
    <text evidence="1">Catalyzes a salvage reaction resulting in the formation of AMP, that is energically less costly than de novo synthesis.</text>
</comment>
<comment type="catalytic activity">
    <reaction evidence="1">
        <text>AMP + diphosphate = 5-phospho-alpha-D-ribose 1-diphosphate + adenine</text>
        <dbReference type="Rhea" id="RHEA:16609"/>
        <dbReference type="ChEBI" id="CHEBI:16708"/>
        <dbReference type="ChEBI" id="CHEBI:33019"/>
        <dbReference type="ChEBI" id="CHEBI:58017"/>
        <dbReference type="ChEBI" id="CHEBI:456215"/>
        <dbReference type="EC" id="2.4.2.7"/>
    </reaction>
</comment>
<comment type="pathway">
    <text evidence="1">Purine metabolism; AMP biosynthesis via salvage pathway; AMP from adenine: step 1/1.</text>
</comment>
<comment type="subunit">
    <text evidence="1">Homodimer.</text>
</comment>
<comment type="subcellular location">
    <subcellularLocation>
        <location evidence="1">Cytoplasm</location>
    </subcellularLocation>
</comment>
<comment type="similarity">
    <text evidence="1">Belongs to the purine/pyrimidine phosphoribosyltransferase family.</text>
</comment>
<gene>
    <name evidence="1" type="primary">apt</name>
    <name type="ordered locus">VV1_2002</name>
</gene>
<sequence length="181" mass="19574">MTTNTIAQIQASIKSIPDYPKPGILFRDVTSLLEDAQAYQATIQLLVDKYKDMGFTKVVGTEARGFLFGAPLALQLGVGFVPVRKPGKLPRNTIAQSYELEYGVDTLEIHTDAIVEGDKVLVVDDLLATGGTIEATTKLIRQLGGVVEHAAFVINLPEIGGDKRLEGLGLNVYSICEFEGH</sequence>
<feature type="chain" id="PRO_0000149486" description="Adenine phosphoribosyltransferase">
    <location>
        <begin position="1"/>
        <end position="181"/>
    </location>
</feature>
<dbReference type="EC" id="2.4.2.7" evidence="1"/>
<dbReference type="EMBL" id="AE016795">
    <property type="protein sequence ID" value="AAO10399.1"/>
    <property type="molecule type" value="Genomic_DNA"/>
</dbReference>
<dbReference type="RefSeq" id="WP_011079898.1">
    <property type="nucleotide sequence ID" value="NC_004459.3"/>
</dbReference>
<dbReference type="SMR" id="Q8DB25"/>
<dbReference type="GeneID" id="93896221"/>
<dbReference type="KEGG" id="vvu:VV1_2002"/>
<dbReference type="HOGENOM" id="CLU_063339_3_0_6"/>
<dbReference type="UniPathway" id="UPA00588">
    <property type="reaction ID" value="UER00646"/>
</dbReference>
<dbReference type="Proteomes" id="UP000002275">
    <property type="component" value="Chromosome 1"/>
</dbReference>
<dbReference type="GO" id="GO:0005737">
    <property type="term" value="C:cytoplasm"/>
    <property type="evidence" value="ECO:0007669"/>
    <property type="project" value="UniProtKB-SubCell"/>
</dbReference>
<dbReference type="GO" id="GO:0002055">
    <property type="term" value="F:adenine binding"/>
    <property type="evidence" value="ECO:0007669"/>
    <property type="project" value="TreeGrafter"/>
</dbReference>
<dbReference type="GO" id="GO:0003999">
    <property type="term" value="F:adenine phosphoribosyltransferase activity"/>
    <property type="evidence" value="ECO:0007669"/>
    <property type="project" value="UniProtKB-UniRule"/>
</dbReference>
<dbReference type="GO" id="GO:0016208">
    <property type="term" value="F:AMP binding"/>
    <property type="evidence" value="ECO:0007669"/>
    <property type="project" value="TreeGrafter"/>
</dbReference>
<dbReference type="GO" id="GO:0006168">
    <property type="term" value="P:adenine salvage"/>
    <property type="evidence" value="ECO:0007669"/>
    <property type="project" value="InterPro"/>
</dbReference>
<dbReference type="GO" id="GO:0044209">
    <property type="term" value="P:AMP salvage"/>
    <property type="evidence" value="ECO:0007669"/>
    <property type="project" value="UniProtKB-UniRule"/>
</dbReference>
<dbReference type="GO" id="GO:0006166">
    <property type="term" value="P:purine ribonucleoside salvage"/>
    <property type="evidence" value="ECO:0007669"/>
    <property type="project" value="UniProtKB-KW"/>
</dbReference>
<dbReference type="CDD" id="cd06223">
    <property type="entry name" value="PRTases_typeI"/>
    <property type="match status" value="1"/>
</dbReference>
<dbReference type="FunFam" id="3.40.50.2020:FF:000004">
    <property type="entry name" value="Adenine phosphoribosyltransferase"/>
    <property type="match status" value="1"/>
</dbReference>
<dbReference type="Gene3D" id="3.40.50.2020">
    <property type="match status" value="1"/>
</dbReference>
<dbReference type="HAMAP" id="MF_00004">
    <property type="entry name" value="Aden_phosphoribosyltr"/>
    <property type="match status" value="1"/>
</dbReference>
<dbReference type="InterPro" id="IPR005764">
    <property type="entry name" value="Ade_phspho_trans"/>
</dbReference>
<dbReference type="InterPro" id="IPR000836">
    <property type="entry name" value="PRibTrfase_dom"/>
</dbReference>
<dbReference type="InterPro" id="IPR029057">
    <property type="entry name" value="PRTase-like"/>
</dbReference>
<dbReference type="InterPro" id="IPR050054">
    <property type="entry name" value="UPRTase/APRTase"/>
</dbReference>
<dbReference type="NCBIfam" id="TIGR01090">
    <property type="entry name" value="apt"/>
    <property type="match status" value="1"/>
</dbReference>
<dbReference type="NCBIfam" id="NF002632">
    <property type="entry name" value="PRK02304.1-1"/>
    <property type="match status" value="1"/>
</dbReference>
<dbReference type="NCBIfam" id="NF002634">
    <property type="entry name" value="PRK02304.1-3"/>
    <property type="match status" value="1"/>
</dbReference>
<dbReference type="NCBIfam" id="NF002636">
    <property type="entry name" value="PRK02304.1-5"/>
    <property type="match status" value="1"/>
</dbReference>
<dbReference type="PANTHER" id="PTHR32315">
    <property type="entry name" value="ADENINE PHOSPHORIBOSYLTRANSFERASE"/>
    <property type="match status" value="1"/>
</dbReference>
<dbReference type="PANTHER" id="PTHR32315:SF3">
    <property type="entry name" value="ADENINE PHOSPHORIBOSYLTRANSFERASE"/>
    <property type="match status" value="1"/>
</dbReference>
<dbReference type="Pfam" id="PF00156">
    <property type="entry name" value="Pribosyltran"/>
    <property type="match status" value="1"/>
</dbReference>
<dbReference type="SUPFAM" id="SSF53271">
    <property type="entry name" value="PRTase-like"/>
    <property type="match status" value="1"/>
</dbReference>
<dbReference type="PROSITE" id="PS00103">
    <property type="entry name" value="PUR_PYR_PR_TRANSFER"/>
    <property type="match status" value="1"/>
</dbReference>
<accession>Q8DB25</accession>
<evidence type="ECO:0000255" key="1">
    <source>
        <dbReference type="HAMAP-Rule" id="MF_00004"/>
    </source>
</evidence>
<name>APT_VIBVU</name>
<organism>
    <name type="scientific">Vibrio vulnificus (strain CMCP6)</name>
    <dbReference type="NCBI Taxonomy" id="216895"/>
    <lineage>
        <taxon>Bacteria</taxon>
        <taxon>Pseudomonadati</taxon>
        <taxon>Pseudomonadota</taxon>
        <taxon>Gammaproteobacteria</taxon>
        <taxon>Vibrionales</taxon>
        <taxon>Vibrionaceae</taxon>
        <taxon>Vibrio</taxon>
    </lineage>
</organism>
<keyword id="KW-0963">Cytoplasm</keyword>
<keyword id="KW-0328">Glycosyltransferase</keyword>
<keyword id="KW-0660">Purine salvage</keyword>
<keyword id="KW-0808">Transferase</keyword>
<protein>
    <recommendedName>
        <fullName evidence="1">Adenine phosphoribosyltransferase</fullName>
        <shortName evidence="1">APRT</shortName>
        <ecNumber evidence="1">2.4.2.7</ecNumber>
    </recommendedName>
</protein>
<proteinExistence type="inferred from homology"/>
<reference key="1">
    <citation type="submission" date="2002-12" db="EMBL/GenBank/DDBJ databases">
        <title>Complete genome sequence of Vibrio vulnificus CMCP6.</title>
        <authorList>
            <person name="Rhee J.H."/>
            <person name="Kim S.Y."/>
            <person name="Chung S.S."/>
            <person name="Kim J.J."/>
            <person name="Moon Y.H."/>
            <person name="Jeong H."/>
            <person name="Choy H.E."/>
        </authorList>
    </citation>
    <scope>NUCLEOTIDE SEQUENCE [LARGE SCALE GENOMIC DNA]</scope>
    <source>
        <strain>CMCP6</strain>
    </source>
</reference>